<reference key="1">
    <citation type="submission" date="2006-12" db="EMBL/GenBank/DDBJ databases">
        <title>Complete sequence of Shewanella amazonensis SB2B.</title>
        <authorList>
            <consortium name="US DOE Joint Genome Institute"/>
            <person name="Copeland A."/>
            <person name="Lucas S."/>
            <person name="Lapidus A."/>
            <person name="Barry K."/>
            <person name="Detter J.C."/>
            <person name="Glavina del Rio T."/>
            <person name="Hammon N."/>
            <person name="Israni S."/>
            <person name="Dalin E."/>
            <person name="Tice H."/>
            <person name="Pitluck S."/>
            <person name="Munk A.C."/>
            <person name="Brettin T."/>
            <person name="Bruce D."/>
            <person name="Han C."/>
            <person name="Tapia R."/>
            <person name="Gilna P."/>
            <person name="Schmutz J."/>
            <person name="Larimer F."/>
            <person name="Land M."/>
            <person name="Hauser L."/>
            <person name="Kyrpides N."/>
            <person name="Mikhailova N."/>
            <person name="Fredrickson J."/>
            <person name="Richardson P."/>
        </authorList>
    </citation>
    <scope>NUCLEOTIDE SEQUENCE [LARGE SCALE GENOMIC DNA]</scope>
    <source>
        <strain>ATCC BAA-1098 / SB2B</strain>
    </source>
</reference>
<dbReference type="EC" id="1.3.5.2" evidence="1"/>
<dbReference type="EMBL" id="CP000507">
    <property type="protein sequence ID" value="ABL99800.1"/>
    <property type="molecule type" value="Genomic_DNA"/>
</dbReference>
<dbReference type="RefSeq" id="WP_011759708.1">
    <property type="nucleotide sequence ID" value="NC_008700.1"/>
</dbReference>
<dbReference type="SMR" id="A1S5Z4"/>
<dbReference type="STRING" id="326297.Sama_1593"/>
<dbReference type="KEGG" id="saz:Sama_1593"/>
<dbReference type="eggNOG" id="COG0167">
    <property type="taxonomic scope" value="Bacteria"/>
</dbReference>
<dbReference type="HOGENOM" id="CLU_013640_2_0_6"/>
<dbReference type="OrthoDB" id="9802377at2"/>
<dbReference type="UniPathway" id="UPA00070">
    <property type="reaction ID" value="UER00946"/>
</dbReference>
<dbReference type="Proteomes" id="UP000009175">
    <property type="component" value="Chromosome"/>
</dbReference>
<dbReference type="GO" id="GO:0005737">
    <property type="term" value="C:cytoplasm"/>
    <property type="evidence" value="ECO:0007669"/>
    <property type="project" value="InterPro"/>
</dbReference>
<dbReference type="GO" id="GO:0005886">
    <property type="term" value="C:plasma membrane"/>
    <property type="evidence" value="ECO:0007669"/>
    <property type="project" value="UniProtKB-SubCell"/>
</dbReference>
<dbReference type="GO" id="GO:0106430">
    <property type="term" value="F:dihydroorotate dehydrogenase (quinone) activity"/>
    <property type="evidence" value="ECO:0007669"/>
    <property type="project" value="UniProtKB-EC"/>
</dbReference>
<dbReference type="GO" id="GO:0006207">
    <property type="term" value="P:'de novo' pyrimidine nucleobase biosynthetic process"/>
    <property type="evidence" value="ECO:0007669"/>
    <property type="project" value="InterPro"/>
</dbReference>
<dbReference type="GO" id="GO:0044205">
    <property type="term" value="P:'de novo' UMP biosynthetic process"/>
    <property type="evidence" value="ECO:0007669"/>
    <property type="project" value="UniProtKB-UniRule"/>
</dbReference>
<dbReference type="CDD" id="cd04738">
    <property type="entry name" value="DHOD_2_like"/>
    <property type="match status" value="1"/>
</dbReference>
<dbReference type="FunFam" id="3.20.20.70:FF:000028">
    <property type="entry name" value="Dihydroorotate dehydrogenase (quinone)"/>
    <property type="match status" value="1"/>
</dbReference>
<dbReference type="Gene3D" id="3.20.20.70">
    <property type="entry name" value="Aldolase class I"/>
    <property type="match status" value="1"/>
</dbReference>
<dbReference type="HAMAP" id="MF_00225">
    <property type="entry name" value="DHO_dh_type2"/>
    <property type="match status" value="1"/>
</dbReference>
<dbReference type="InterPro" id="IPR013785">
    <property type="entry name" value="Aldolase_TIM"/>
</dbReference>
<dbReference type="InterPro" id="IPR050074">
    <property type="entry name" value="DHO_dehydrogenase"/>
</dbReference>
<dbReference type="InterPro" id="IPR012135">
    <property type="entry name" value="Dihydroorotate_DH_1_2"/>
</dbReference>
<dbReference type="InterPro" id="IPR005719">
    <property type="entry name" value="Dihydroorotate_DH_2"/>
</dbReference>
<dbReference type="InterPro" id="IPR005720">
    <property type="entry name" value="Dihydroorotate_DH_cat"/>
</dbReference>
<dbReference type="InterPro" id="IPR001295">
    <property type="entry name" value="Dihydroorotate_DH_CS"/>
</dbReference>
<dbReference type="NCBIfam" id="NF003644">
    <property type="entry name" value="PRK05286.1-1"/>
    <property type="match status" value="1"/>
</dbReference>
<dbReference type="NCBIfam" id="NF003645">
    <property type="entry name" value="PRK05286.1-2"/>
    <property type="match status" value="1"/>
</dbReference>
<dbReference type="NCBIfam" id="NF003646">
    <property type="entry name" value="PRK05286.1-4"/>
    <property type="match status" value="1"/>
</dbReference>
<dbReference type="NCBIfam" id="NF003652">
    <property type="entry name" value="PRK05286.2-5"/>
    <property type="match status" value="1"/>
</dbReference>
<dbReference type="NCBIfam" id="TIGR01036">
    <property type="entry name" value="pyrD_sub2"/>
    <property type="match status" value="1"/>
</dbReference>
<dbReference type="PANTHER" id="PTHR48109:SF4">
    <property type="entry name" value="DIHYDROOROTATE DEHYDROGENASE (QUINONE), MITOCHONDRIAL"/>
    <property type="match status" value="1"/>
</dbReference>
<dbReference type="PANTHER" id="PTHR48109">
    <property type="entry name" value="DIHYDROOROTATE DEHYDROGENASE (QUINONE), MITOCHONDRIAL-RELATED"/>
    <property type="match status" value="1"/>
</dbReference>
<dbReference type="Pfam" id="PF01180">
    <property type="entry name" value="DHO_dh"/>
    <property type="match status" value="1"/>
</dbReference>
<dbReference type="PIRSF" id="PIRSF000164">
    <property type="entry name" value="DHO_oxidase"/>
    <property type="match status" value="1"/>
</dbReference>
<dbReference type="SUPFAM" id="SSF51395">
    <property type="entry name" value="FMN-linked oxidoreductases"/>
    <property type="match status" value="1"/>
</dbReference>
<dbReference type="PROSITE" id="PS00911">
    <property type="entry name" value="DHODEHASE_1"/>
    <property type="match status" value="1"/>
</dbReference>
<dbReference type="PROSITE" id="PS00912">
    <property type="entry name" value="DHODEHASE_2"/>
    <property type="match status" value="1"/>
</dbReference>
<proteinExistence type="inferred from homology"/>
<protein>
    <recommendedName>
        <fullName evidence="1">Dihydroorotate dehydrogenase (quinone)</fullName>
        <ecNumber evidence="1">1.3.5.2</ecNumber>
    </recommendedName>
    <alternativeName>
        <fullName evidence="1">DHOdehase</fullName>
        <shortName evidence="1">DHOD</shortName>
        <shortName evidence="1">DHODase</shortName>
    </alternativeName>
    <alternativeName>
        <fullName evidence="1">Dihydroorotate oxidase</fullName>
    </alternativeName>
</protein>
<feature type="chain" id="PRO_1000024219" description="Dihydroorotate dehydrogenase (quinone)">
    <location>
        <begin position="1"/>
        <end position="339"/>
    </location>
</feature>
<feature type="active site" description="Nucleophile" evidence="1">
    <location>
        <position position="175"/>
    </location>
</feature>
<feature type="binding site" evidence="1">
    <location>
        <begin position="62"/>
        <end position="66"/>
    </location>
    <ligand>
        <name>FMN</name>
        <dbReference type="ChEBI" id="CHEBI:58210"/>
    </ligand>
</feature>
<feature type="binding site" evidence="1">
    <location>
        <position position="66"/>
    </location>
    <ligand>
        <name>substrate</name>
    </ligand>
</feature>
<feature type="binding site" evidence="1">
    <location>
        <position position="86"/>
    </location>
    <ligand>
        <name>FMN</name>
        <dbReference type="ChEBI" id="CHEBI:58210"/>
    </ligand>
</feature>
<feature type="binding site" evidence="1">
    <location>
        <begin position="111"/>
        <end position="115"/>
    </location>
    <ligand>
        <name>substrate</name>
    </ligand>
</feature>
<feature type="binding site" evidence="1">
    <location>
        <position position="139"/>
    </location>
    <ligand>
        <name>FMN</name>
        <dbReference type="ChEBI" id="CHEBI:58210"/>
    </ligand>
</feature>
<feature type="binding site" evidence="1">
    <location>
        <position position="172"/>
    </location>
    <ligand>
        <name>FMN</name>
        <dbReference type="ChEBI" id="CHEBI:58210"/>
    </ligand>
</feature>
<feature type="binding site" evidence="1">
    <location>
        <position position="172"/>
    </location>
    <ligand>
        <name>substrate</name>
    </ligand>
</feature>
<feature type="binding site" evidence="1">
    <location>
        <position position="177"/>
    </location>
    <ligand>
        <name>substrate</name>
    </ligand>
</feature>
<feature type="binding site" evidence="1">
    <location>
        <position position="217"/>
    </location>
    <ligand>
        <name>FMN</name>
        <dbReference type="ChEBI" id="CHEBI:58210"/>
    </ligand>
</feature>
<feature type="binding site" evidence="1">
    <location>
        <position position="245"/>
    </location>
    <ligand>
        <name>FMN</name>
        <dbReference type="ChEBI" id="CHEBI:58210"/>
    </ligand>
</feature>
<feature type="binding site" evidence="1">
    <location>
        <begin position="246"/>
        <end position="247"/>
    </location>
    <ligand>
        <name>substrate</name>
    </ligand>
</feature>
<feature type="binding site" evidence="1">
    <location>
        <position position="268"/>
    </location>
    <ligand>
        <name>FMN</name>
        <dbReference type="ChEBI" id="CHEBI:58210"/>
    </ligand>
</feature>
<feature type="binding site" evidence="1">
    <location>
        <position position="297"/>
    </location>
    <ligand>
        <name>FMN</name>
        <dbReference type="ChEBI" id="CHEBI:58210"/>
    </ligand>
</feature>
<feature type="binding site" evidence="1">
    <location>
        <begin position="318"/>
        <end position="319"/>
    </location>
    <ligand>
        <name>FMN</name>
        <dbReference type="ChEBI" id="CHEBI:58210"/>
    </ligand>
</feature>
<accession>A1S5Z4</accession>
<sequence>MFYKIAQSIMFQMDPERAHNLAIGSLKRTANTPMTAFYAQCIAPKPVTCMGIIFPNPVGLAAGLDKDGEAIDAFHAMGFGHVEVGTVTPRPQPGNDLPRLFRLKPAKGIINRMGFNNKGVDNLVANLKAKKTDILVGVNIGKNKDTPVEEGKNDYLICMDKVYPHAAYIAVNISSPNTPGLRTLQYGDLLDDLLSSLKAKQTELAEQHGKYVPIALKIAPDLTDEEIASIATSLIKNQFDAAIATNTTLSRDGVSGLANANETGGLSGKPLTELSTKVIKKLAAELKGEIPIIGVGGINSSQDALAKFDAGATLVQIYSGFIYQGPKLIKDIVASYSAK</sequence>
<organism>
    <name type="scientific">Shewanella amazonensis (strain ATCC BAA-1098 / SB2B)</name>
    <dbReference type="NCBI Taxonomy" id="326297"/>
    <lineage>
        <taxon>Bacteria</taxon>
        <taxon>Pseudomonadati</taxon>
        <taxon>Pseudomonadota</taxon>
        <taxon>Gammaproteobacteria</taxon>
        <taxon>Alteromonadales</taxon>
        <taxon>Shewanellaceae</taxon>
        <taxon>Shewanella</taxon>
    </lineage>
</organism>
<evidence type="ECO:0000255" key="1">
    <source>
        <dbReference type="HAMAP-Rule" id="MF_00225"/>
    </source>
</evidence>
<keyword id="KW-1003">Cell membrane</keyword>
<keyword id="KW-0285">Flavoprotein</keyword>
<keyword id="KW-0288">FMN</keyword>
<keyword id="KW-0472">Membrane</keyword>
<keyword id="KW-0560">Oxidoreductase</keyword>
<keyword id="KW-0665">Pyrimidine biosynthesis</keyword>
<keyword id="KW-1185">Reference proteome</keyword>
<comment type="function">
    <text evidence="1">Catalyzes the conversion of dihydroorotate to orotate with quinone as electron acceptor.</text>
</comment>
<comment type="catalytic activity">
    <reaction evidence="1">
        <text>(S)-dihydroorotate + a quinone = orotate + a quinol</text>
        <dbReference type="Rhea" id="RHEA:30187"/>
        <dbReference type="ChEBI" id="CHEBI:24646"/>
        <dbReference type="ChEBI" id="CHEBI:30839"/>
        <dbReference type="ChEBI" id="CHEBI:30864"/>
        <dbReference type="ChEBI" id="CHEBI:132124"/>
        <dbReference type="EC" id="1.3.5.2"/>
    </reaction>
</comment>
<comment type="cofactor">
    <cofactor evidence="1">
        <name>FMN</name>
        <dbReference type="ChEBI" id="CHEBI:58210"/>
    </cofactor>
    <text evidence="1">Binds 1 FMN per subunit.</text>
</comment>
<comment type="pathway">
    <text evidence="1">Pyrimidine metabolism; UMP biosynthesis via de novo pathway; orotate from (S)-dihydroorotate (quinone route): step 1/1.</text>
</comment>
<comment type="subunit">
    <text evidence="1">Monomer.</text>
</comment>
<comment type="subcellular location">
    <subcellularLocation>
        <location evidence="1">Cell membrane</location>
        <topology evidence="1">Peripheral membrane protein</topology>
    </subcellularLocation>
</comment>
<comment type="similarity">
    <text evidence="1">Belongs to the dihydroorotate dehydrogenase family. Type 2 subfamily.</text>
</comment>
<gene>
    <name evidence="1" type="primary">pyrD</name>
    <name type="ordered locus">Sama_1593</name>
</gene>
<name>PYRD_SHEAM</name>